<reference key="1">
    <citation type="journal article" date="2010" name="Genome Biol. Evol.">
        <title>Continuing evolution of Burkholderia mallei through genome reduction and large-scale rearrangements.</title>
        <authorList>
            <person name="Losada L."/>
            <person name="Ronning C.M."/>
            <person name="DeShazer D."/>
            <person name="Woods D."/>
            <person name="Fedorova N."/>
            <person name="Kim H.S."/>
            <person name="Shabalina S.A."/>
            <person name="Pearson T.R."/>
            <person name="Brinkac L."/>
            <person name="Tan P."/>
            <person name="Nandi T."/>
            <person name="Crabtree J."/>
            <person name="Badger J."/>
            <person name="Beckstrom-Sternberg S."/>
            <person name="Saqib M."/>
            <person name="Schutzer S.E."/>
            <person name="Keim P."/>
            <person name="Nierman W.C."/>
        </authorList>
    </citation>
    <scope>NUCLEOTIDE SEQUENCE [LARGE SCALE GENOMIC DNA]</scope>
    <source>
        <strain>NCTC 10247</strain>
    </source>
</reference>
<name>PLSX_BURM7</name>
<evidence type="ECO:0000255" key="1">
    <source>
        <dbReference type="HAMAP-Rule" id="MF_00019"/>
    </source>
</evidence>
<evidence type="ECO:0000256" key="2">
    <source>
        <dbReference type="SAM" id="MobiDB-lite"/>
    </source>
</evidence>
<sequence length="368" mass="38940">MTVKLTIDCMGGDHGPSVTVPAAVKFVRSHPDAHLMLVGIESAIRAQLKKCKALGEPALSVVPATEVVAMDDPVEVALRKKKDSSMRVALNHVKEGAAQACISAGNTGALMAVSRYVLKTLPGIERPAIAFALPNPTGYTMMLDLGANVDCEPQHLLQFAEMGHALVAALEGKERPTIGLLNIGEEVIKGNETIKRAGELLRASTLNFRGNVEGNDIYKGTVDVIVCDGFVGNVALKTSEGLAQMLADIIKEEFSRSLLSKLMAILALPVLLRFKKRVDHRQYNGAALLGLRSLVIKSHGSADAYAFEWAIKRGYDAVKNGVLERLSRAMAENAAPLGESGRDANGAGQASPSAGQPAEPSAALSSKT</sequence>
<dbReference type="EC" id="2.3.1.274" evidence="1"/>
<dbReference type="EMBL" id="CP000548">
    <property type="protein sequence ID" value="ABO05451.1"/>
    <property type="molecule type" value="Genomic_DNA"/>
</dbReference>
<dbReference type="RefSeq" id="WP_004192749.1">
    <property type="nucleotide sequence ID" value="NZ_CP007802.1"/>
</dbReference>
<dbReference type="SMR" id="A3MM56"/>
<dbReference type="GeneID" id="93061023"/>
<dbReference type="KEGG" id="bmaz:BM44_1396"/>
<dbReference type="KEGG" id="bmn:BMA10247_1803"/>
<dbReference type="PATRIC" id="fig|320389.8.peg.1557"/>
<dbReference type="UniPathway" id="UPA00085"/>
<dbReference type="GO" id="GO:0005737">
    <property type="term" value="C:cytoplasm"/>
    <property type="evidence" value="ECO:0007669"/>
    <property type="project" value="UniProtKB-SubCell"/>
</dbReference>
<dbReference type="GO" id="GO:0043811">
    <property type="term" value="F:phosphate:acyl-[acyl carrier protein] acyltransferase activity"/>
    <property type="evidence" value="ECO:0007669"/>
    <property type="project" value="UniProtKB-UniRule"/>
</dbReference>
<dbReference type="GO" id="GO:0006633">
    <property type="term" value="P:fatty acid biosynthetic process"/>
    <property type="evidence" value="ECO:0007669"/>
    <property type="project" value="UniProtKB-UniRule"/>
</dbReference>
<dbReference type="GO" id="GO:0008654">
    <property type="term" value="P:phospholipid biosynthetic process"/>
    <property type="evidence" value="ECO:0007669"/>
    <property type="project" value="UniProtKB-KW"/>
</dbReference>
<dbReference type="Gene3D" id="3.40.718.10">
    <property type="entry name" value="Isopropylmalate Dehydrogenase"/>
    <property type="match status" value="1"/>
</dbReference>
<dbReference type="HAMAP" id="MF_00019">
    <property type="entry name" value="PlsX"/>
    <property type="match status" value="1"/>
</dbReference>
<dbReference type="InterPro" id="IPR003664">
    <property type="entry name" value="FA_synthesis"/>
</dbReference>
<dbReference type="InterPro" id="IPR012281">
    <property type="entry name" value="Phospholipid_synth_PlsX-like"/>
</dbReference>
<dbReference type="NCBIfam" id="TIGR00182">
    <property type="entry name" value="plsX"/>
    <property type="match status" value="1"/>
</dbReference>
<dbReference type="PANTHER" id="PTHR30100">
    <property type="entry name" value="FATTY ACID/PHOSPHOLIPID SYNTHESIS PROTEIN PLSX"/>
    <property type="match status" value="1"/>
</dbReference>
<dbReference type="PANTHER" id="PTHR30100:SF1">
    <property type="entry name" value="PHOSPHATE ACYLTRANSFERASE"/>
    <property type="match status" value="1"/>
</dbReference>
<dbReference type="Pfam" id="PF02504">
    <property type="entry name" value="FA_synthesis"/>
    <property type="match status" value="1"/>
</dbReference>
<dbReference type="PIRSF" id="PIRSF002465">
    <property type="entry name" value="Phsphlp_syn_PlsX"/>
    <property type="match status" value="1"/>
</dbReference>
<dbReference type="SUPFAM" id="SSF53659">
    <property type="entry name" value="Isocitrate/Isopropylmalate dehydrogenase-like"/>
    <property type="match status" value="1"/>
</dbReference>
<proteinExistence type="inferred from homology"/>
<protein>
    <recommendedName>
        <fullName evidence="1">Phosphate acyltransferase</fullName>
        <ecNumber evidence="1">2.3.1.274</ecNumber>
    </recommendedName>
    <alternativeName>
        <fullName evidence="1">Acyl-ACP phosphotransacylase</fullName>
    </alternativeName>
    <alternativeName>
        <fullName evidence="1">Acyl-[acyl-carrier-protein]--phosphate acyltransferase</fullName>
    </alternativeName>
    <alternativeName>
        <fullName evidence="1">Phosphate-acyl-ACP acyltransferase</fullName>
    </alternativeName>
</protein>
<comment type="function">
    <text evidence="1">Catalyzes the reversible formation of acyl-phosphate (acyl-PO(4)) from acyl-[acyl-carrier-protein] (acyl-ACP). This enzyme utilizes acyl-ACP as fatty acyl donor, but not acyl-CoA.</text>
</comment>
<comment type="catalytic activity">
    <reaction evidence="1">
        <text>a fatty acyl-[ACP] + phosphate = an acyl phosphate + holo-[ACP]</text>
        <dbReference type="Rhea" id="RHEA:42292"/>
        <dbReference type="Rhea" id="RHEA-COMP:9685"/>
        <dbReference type="Rhea" id="RHEA-COMP:14125"/>
        <dbReference type="ChEBI" id="CHEBI:43474"/>
        <dbReference type="ChEBI" id="CHEBI:59918"/>
        <dbReference type="ChEBI" id="CHEBI:64479"/>
        <dbReference type="ChEBI" id="CHEBI:138651"/>
        <dbReference type="EC" id="2.3.1.274"/>
    </reaction>
</comment>
<comment type="pathway">
    <text evidence="1">Lipid metabolism; phospholipid metabolism.</text>
</comment>
<comment type="subunit">
    <text evidence="1">Homodimer. Probably interacts with PlsY.</text>
</comment>
<comment type="subcellular location">
    <subcellularLocation>
        <location evidence="1">Cytoplasm</location>
    </subcellularLocation>
    <text evidence="1">Associated with the membrane possibly through PlsY.</text>
</comment>
<comment type="similarity">
    <text evidence="1">Belongs to the PlsX family.</text>
</comment>
<keyword id="KW-0963">Cytoplasm</keyword>
<keyword id="KW-0444">Lipid biosynthesis</keyword>
<keyword id="KW-0443">Lipid metabolism</keyword>
<keyword id="KW-0594">Phospholipid biosynthesis</keyword>
<keyword id="KW-1208">Phospholipid metabolism</keyword>
<keyword id="KW-0808">Transferase</keyword>
<organism>
    <name type="scientific">Burkholderia mallei (strain NCTC 10247)</name>
    <dbReference type="NCBI Taxonomy" id="320389"/>
    <lineage>
        <taxon>Bacteria</taxon>
        <taxon>Pseudomonadati</taxon>
        <taxon>Pseudomonadota</taxon>
        <taxon>Betaproteobacteria</taxon>
        <taxon>Burkholderiales</taxon>
        <taxon>Burkholderiaceae</taxon>
        <taxon>Burkholderia</taxon>
        <taxon>pseudomallei group</taxon>
    </lineage>
</organism>
<feature type="chain" id="PRO_1000001729" description="Phosphate acyltransferase">
    <location>
        <begin position="1"/>
        <end position="368"/>
    </location>
</feature>
<feature type="region of interest" description="Disordered" evidence="2">
    <location>
        <begin position="334"/>
        <end position="368"/>
    </location>
</feature>
<gene>
    <name evidence="1" type="primary">plsX</name>
    <name type="ordered locus">BMA10247_1803</name>
</gene>
<accession>A3MM56</accession>